<feature type="initiator methionine" description="Removed" evidence="1">
    <location>
        <position position="1"/>
    </location>
</feature>
<feature type="chain" id="PRO_0000077236" description="Large ribosomal subunit protein uL3">
    <location>
        <begin position="2"/>
        <end position="398"/>
    </location>
</feature>
<feature type="region of interest" description="Disordered" evidence="2">
    <location>
        <begin position="1"/>
        <end position="34"/>
    </location>
</feature>
<feature type="compositionally biased region" description="Basic and acidic residues" evidence="2">
    <location>
        <begin position="1"/>
        <end position="10"/>
    </location>
</feature>
<feature type="compositionally biased region" description="Basic residues" evidence="2">
    <location>
        <begin position="17"/>
        <end position="28"/>
    </location>
</feature>
<feature type="helix" evidence="4">
    <location>
        <begin position="14"/>
        <end position="16"/>
    </location>
</feature>
<feature type="turn" evidence="4">
    <location>
        <begin position="39"/>
        <end position="41"/>
    </location>
</feature>
<feature type="strand" evidence="4">
    <location>
        <begin position="45"/>
        <end position="59"/>
    </location>
</feature>
<feature type="strand" evidence="4">
    <location>
        <begin position="63"/>
        <end position="66"/>
    </location>
</feature>
<feature type="strand" evidence="4">
    <location>
        <begin position="71"/>
        <end position="80"/>
    </location>
</feature>
<feature type="strand" evidence="4">
    <location>
        <begin position="84"/>
        <end position="93"/>
    </location>
</feature>
<feature type="strand" evidence="4">
    <location>
        <begin position="101"/>
        <end position="106"/>
    </location>
</feature>
<feature type="helix" evidence="4">
    <location>
        <begin position="112"/>
        <end position="115"/>
    </location>
</feature>
<feature type="strand" evidence="4">
    <location>
        <begin position="119"/>
        <end position="121"/>
    </location>
</feature>
<feature type="helix" evidence="4">
    <location>
        <begin position="142"/>
        <end position="156"/>
    </location>
</feature>
<feature type="strand" evidence="4">
    <location>
        <begin position="157"/>
        <end position="159"/>
    </location>
</feature>
<feature type="strand" evidence="4">
    <location>
        <begin position="162"/>
        <end position="166"/>
    </location>
</feature>
<feature type="strand" evidence="4">
    <location>
        <begin position="170"/>
        <end position="175"/>
    </location>
</feature>
<feature type="strand" evidence="4">
    <location>
        <begin position="181"/>
        <end position="185"/>
    </location>
</feature>
<feature type="helix" evidence="4">
    <location>
        <begin position="191"/>
        <end position="200"/>
    </location>
</feature>
<feature type="strand" evidence="4">
    <location>
        <begin position="202"/>
        <end position="206"/>
    </location>
</feature>
<feature type="helix" evidence="4">
    <location>
        <begin position="208"/>
        <end position="211"/>
    </location>
</feature>
<feature type="strand" evidence="4">
    <location>
        <begin position="214"/>
        <end position="216"/>
    </location>
</feature>
<feature type="strand" evidence="4">
    <location>
        <begin position="218"/>
        <end position="223"/>
    </location>
</feature>
<feature type="helix" evidence="4">
    <location>
        <begin position="232"/>
        <end position="236"/>
    </location>
</feature>
<feature type="turn" evidence="4">
    <location>
        <begin position="243"/>
        <end position="245"/>
    </location>
</feature>
<feature type="strand" evidence="4">
    <location>
        <begin position="258"/>
        <end position="262"/>
    </location>
</feature>
<feature type="strand" evidence="4">
    <location>
        <begin position="265"/>
        <end position="267"/>
    </location>
</feature>
<feature type="strand" evidence="4">
    <location>
        <begin position="272"/>
        <end position="274"/>
    </location>
</feature>
<feature type="strand" evidence="4">
    <location>
        <begin position="277"/>
        <end position="283"/>
    </location>
</feature>
<feature type="strand" evidence="4">
    <location>
        <begin position="292"/>
        <end position="295"/>
    </location>
</feature>
<feature type="strand" evidence="4">
    <location>
        <begin position="297"/>
        <end position="302"/>
    </location>
</feature>
<feature type="turn" evidence="4">
    <location>
        <begin position="316"/>
        <end position="321"/>
    </location>
</feature>
<feature type="strand" evidence="4">
    <location>
        <begin position="329"/>
        <end position="334"/>
    </location>
</feature>
<feature type="strand" evidence="4">
    <location>
        <begin position="343"/>
        <end position="348"/>
    </location>
</feature>
<feature type="turn" evidence="4">
    <location>
        <begin position="356"/>
        <end position="358"/>
    </location>
</feature>
<feature type="strand" evidence="4">
    <location>
        <begin position="364"/>
        <end position="367"/>
    </location>
</feature>
<feature type="strand" evidence="4">
    <location>
        <begin position="371"/>
        <end position="377"/>
    </location>
</feature>
<feature type="helix" evidence="4">
    <location>
        <begin position="379"/>
        <end position="388"/>
    </location>
</feature>
<feature type="strand" evidence="4">
    <location>
        <begin position="391"/>
        <end position="394"/>
    </location>
</feature>
<accession>P34113</accession>
<accession>Q54DX5</accession>
<proteinExistence type="evidence at protein level"/>
<organism>
    <name type="scientific">Dictyostelium discoideum</name>
    <name type="common">Social amoeba</name>
    <dbReference type="NCBI Taxonomy" id="44689"/>
    <lineage>
        <taxon>Eukaryota</taxon>
        <taxon>Amoebozoa</taxon>
        <taxon>Evosea</taxon>
        <taxon>Eumycetozoa</taxon>
        <taxon>Dictyostelia</taxon>
        <taxon>Dictyosteliales</taxon>
        <taxon>Dictyosteliaceae</taxon>
        <taxon>Dictyostelium</taxon>
    </lineage>
</organism>
<evidence type="ECO:0000250" key="1"/>
<evidence type="ECO:0000256" key="2">
    <source>
        <dbReference type="SAM" id="MobiDB-lite"/>
    </source>
</evidence>
<evidence type="ECO:0000305" key="3"/>
<evidence type="ECO:0007829" key="4">
    <source>
        <dbReference type="PDB" id="5AN9"/>
    </source>
</evidence>
<dbReference type="EMBL" id="L08391">
    <property type="protein sequence ID" value="AAA99508.1"/>
    <property type="molecule type" value="Genomic_DNA"/>
</dbReference>
<dbReference type="EMBL" id="AAFI02000186">
    <property type="protein sequence ID" value="EAL61461.1"/>
    <property type="molecule type" value="Genomic_DNA"/>
</dbReference>
<dbReference type="PIR" id="JC4254">
    <property type="entry name" value="JC4254"/>
</dbReference>
<dbReference type="RefSeq" id="XP_629921.1">
    <property type="nucleotide sequence ID" value="XM_629919.1"/>
</dbReference>
<dbReference type="PDB" id="5AN9">
    <property type="method" value="EM"/>
    <property type="resolution" value="3.30 A"/>
    <property type="chains" value="A=1-398"/>
</dbReference>
<dbReference type="PDB" id="5ANB">
    <property type="method" value="EM"/>
    <property type="resolution" value="4.10 A"/>
    <property type="chains" value="A=1-398"/>
</dbReference>
<dbReference type="PDB" id="5ANC">
    <property type="method" value="EM"/>
    <property type="resolution" value="4.20 A"/>
    <property type="chains" value="A=1-398"/>
</dbReference>
<dbReference type="PDB" id="6QKL">
    <property type="method" value="EM"/>
    <property type="resolution" value="3.30 A"/>
    <property type="chains" value="A=1-398"/>
</dbReference>
<dbReference type="PDBsum" id="5AN9"/>
<dbReference type="PDBsum" id="5ANB"/>
<dbReference type="PDBsum" id="5ANC"/>
<dbReference type="PDBsum" id="6QKL"/>
<dbReference type="SMR" id="P34113"/>
<dbReference type="FunCoup" id="P34113">
    <property type="interactions" value="282"/>
</dbReference>
<dbReference type="STRING" id="44689.P34113"/>
<dbReference type="PaxDb" id="44689-DDB0191094"/>
<dbReference type="EnsemblProtists" id="EAL61461">
    <property type="protein sequence ID" value="EAL61461"/>
    <property type="gene ID" value="DDB_G0291862"/>
</dbReference>
<dbReference type="GeneID" id="8628422"/>
<dbReference type="KEGG" id="ddi:DDB_G0291862"/>
<dbReference type="dictyBase" id="DDB_G0291862">
    <property type="gene designation" value="rpl3"/>
</dbReference>
<dbReference type="VEuPathDB" id="AmoebaDB:DDB_G0291862"/>
<dbReference type="eggNOG" id="KOG0746">
    <property type="taxonomic scope" value="Eukaryota"/>
</dbReference>
<dbReference type="HOGENOM" id="CLU_033361_2_1_1"/>
<dbReference type="InParanoid" id="P34113"/>
<dbReference type="OMA" id="QRTEYNK"/>
<dbReference type="PhylomeDB" id="P34113"/>
<dbReference type="Reactome" id="R-DDI-156827">
    <property type="pathway name" value="L13a-mediated translational silencing of Ceruloplasmin expression"/>
</dbReference>
<dbReference type="Reactome" id="R-DDI-1799339">
    <property type="pathway name" value="SRP-dependent cotranslational protein targeting to membrane"/>
</dbReference>
<dbReference type="Reactome" id="R-DDI-72689">
    <property type="pathway name" value="Formation of a pool of free 40S subunits"/>
</dbReference>
<dbReference type="Reactome" id="R-DDI-72706">
    <property type="pathway name" value="GTP hydrolysis and joining of the 60S ribosomal subunit"/>
</dbReference>
<dbReference type="Reactome" id="R-DDI-975956">
    <property type="pathway name" value="Nonsense Mediated Decay (NMD) independent of the Exon Junction Complex (EJC)"/>
</dbReference>
<dbReference type="Reactome" id="R-DDI-975957">
    <property type="pathway name" value="Nonsense Mediated Decay (NMD) enhanced by the Exon Junction Complex (EJC)"/>
</dbReference>
<dbReference type="EvolutionaryTrace" id="P34113"/>
<dbReference type="PRO" id="PR:P34113"/>
<dbReference type="Proteomes" id="UP000002195">
    <property type="component" value="Chromosome 6"/>
</dbReference>
<dbReference type="GO" id="GO:0022625">
    <property type="term" value="C:cytosolic large ribosomal subunit"/>
    <property type="evidence" value="ECO:0000318"/>
    <property type="project" value="GO_Central"/>
</dbReference>
<dbReference type="GO" id="GO:0031012">
    <property type="term" value="C:extracellular matrix"/>
    <property type="evidence" value="ECO:0007005"/>
    <property type="project" value="dictyBase"/>
</dbReference>
<dbReference type="GO" id="GO:0003723">
    <property type="term" value="F:RNA binding"/>
    <property type="evidence" value="ECO:0000318"/>
    <property type="project" value="GO_Central"/>
</dbReference>
<dbReference type="GO" id="GO:0003735">
    <property type="term" value="F:structural constituent of ribosome"/>
    <property type="evidence" value="ECO:0000318"/>
    <property type="project" value="GO_Central"/>
</dbReference>
<dbReference type="GO" id="GO:0006412">
    <property type="term" value="P:translation"/>
    <property type="evidence" value="ECO:0000318"/>
    <property type="project" value="GO_Central"/>
</dbReference>
<dbReference type="FunFam" id="2.40.30.10:FF:000079">
    <property type="entry name" value="60S ribosomal protein L3"/>
    <property type="match status" value="1"/>
</dbReference>
<dbReference type="FunFam" id="3.30.1430.10:FF:000001">
    <property type="entry name" value="60S ribosomal protein L3"/>
    <property type="match status" value="1"/>
</dbReference>
<dbReference type="FunFam" id="4.10.960.10:FF:000002">
    <property type="entry name" value="60S ribosomal protein L3"/>
    <property type="match status" value="1"/>
</dbReference>
<dbReference type="FunFam" id="2.40.30.10:FF:000351">
    <property type="entry name" value="Ribosomal protein L3"/>
    <property type="match status" value="1"/>
</dbReference>
<dbReference type="Gene3D" id="3.30.1430.10">
    <property type="match status" value="1"/>
</dbReference>
<dbReference type="Gene3D" id="4.10.960.10">
    <property type="entry name" value="Ribosomal protein L3, domain 3"/>
    <property type="match status" value="1"/>
</dbReference>
<dbReference type="Gene3D" id="2.40.30.10">
    <property type="entry name" value="Translation factors"/>
    <property type="match status" value="1"/>
</dbReference>
<dbReference type="InterPro" id="IPR045077">
    <property type="entry name" value="L3_arc_euk"/>
</dbReference>
<dbReference type="InterPro" id="IPR044892">
    <property type="entry name" value="Ribosomal_L3_dom_3_arc_sf"/>
</dbReference>
<dbReference type="InterPro" id="IPR000597">
    <property type="entry name" value="Ribosomal_uL3"/>
</dbReference>
<dbReference type="InterPro" id="IPR019926">
    <property type="entry name" value="Ribosomal_uL3_CS"/>
</dbReference>
<dbReference type="InterPro" id="IPR009000">
    <property type="entry name" value="Transl_B-barrel_sf"/>
</dbReference>
<dbReference type="PANTHER" id="PTHR11363">
    <property type="entry name" value="60S RIBOSOMAL PROTEIN L3-RELATED"/>
    <property type="match status" value="1"/>
</dbReference>
<dbReference type="PANTHER" id="PTHR11363:SF5">
    <property type="entry name" value="LARGE RIBOSOMAL SUBUNIT PROTEIN UL3"/>
    <property type="match status" value="1"/>
</dbReference>
<dbReference type="Pfam" id="PF00297">
    <property type="entry name" value="Ribosomal_L3"/>
    <property type="match status" value="1"/>
</dbReference>
<dbReference type="SUPFAM" id="SSF50447">
    <property type="entry name" value="Translation proteins"/>
    <property type="match status" value="1"/>
</dbReference>
<dbReference type="PROSITE" id="PS00474">
    <property type="entry name" value="RIBOSOMAL_L3"/>
    <property type="match status" value="1"/>
</dbReference>
<comment type="function">
    <text>The L3 protein is a component of the large subunit of cytoplasmic ribosomes.</text>
</comment>
<comment type="subcellular location">
    <subcellularLocation>
        <location>Cytoplasm</location>
    </subcellularLocation>
</comment>
<comment type="similarity">
    <text evidence="3">Belongs to the universal ribosomal protein uL3 family.</text>
</comment>
<keyword id="KW-0002">3D-structure</keyword>
<keyword id="KW-0963">Cytoplasm</keyword>
<keyword id="KW-0903">Direct protein sequencing</keyword>
<keyword id="KW-1185">Reference proteome</keyword>
<keyword id="KW-0687">Ribonucleoprotein</keyword>
<keyword id="KW-0689">Ribosomal protein</keyword>
<gene>
    <name type="primary">rpl3</name>
    <name type="ORF">DDB_G0291862</name>
</gene>
<sequence length="398" mass="45060">MSHRKFEAPRHGNLGFRPRKRAARHQGKVKSFPKDDRTQKVHLTAFMGYKAGMTHVVRDLEKPGSKMHKKEIVEAVTIIECPPMYIVGLVGYVETAQGLKTYKTVWAQHLSDNFRRRLYKNWYKSKSKKAFTKYVKQYETEEGKKSIEASLQAIKKRCSVVRVIAHTQVHKLKLTQKKAHVLEIQVNGGSIVEKVNFAVANFEKTVNVTGVFAENELIDVIGVTKGKGFNGVIKRWGVRKLPRKTHKGLRKVACIGAWHPSRVSTTVPRAGQLGYHHRVERNKKIYRIGQAQPEDGKQISTGKTEFDLTEKTINPMGGFAHYGMVKHEFLMLKGCVAGPRKRALTLRKSITTQTGRAALEKITLKFIDTSSKFGHGLHQTAEDKTKYFGVKKSRSTKA</sequence>
<name>RL3_DICDI</name>
<reference key="1">
    <citation type="journal article" date="1995" name="Gene">
        <title>Sequence and developmental regulation of the gene that encodes the Dictyostelium discoideum L3 ribosomal protein.</title>
        <authorList>
            <person name="Steel L.F."/>
            <person name="Farnum P.D."/>
            <person name="Kunapoli P."/>
        </authorList>
    </citation>
    <scope>NUCLEOTIDE SEQUENCE [GENOMIC DNA]</scope>
</reference>
<reference key="2">
    <citation type="journal article" date="2005" name="Nature">
        <title>The genome of the social amoeba Dictyostelium discoideum.</title>
        <authorList>
            <person name="Eichinger L."/>
            <person name="Pachebat J.A."/>
            <person name="Gloeckner G."/>
            <person name="Rajandream M.A."/>
            <person name="Sucgang R."/>
            <person name="Berriman M."/>
            <person name="Song J."/>
            <person name="Olsen R."/>
            <person name="Szafranski K."/>
            <person name="Xu Q."/>
            <person name="Tunggal B."/>
            <person name="Kummerfeld S."/>
            <person name="Madera M."/>
            <person name="Konfortov B.A."/>
            <person name="Rivero F."/>
            <person name="Bankier A.T."/>
            <person name="Lehmann R."/>
            <person name="Hamlin N."/>
            <person name="Davies R."/>
            <person name="Gaudet P."/>
            <person name="Fey P."/>
            <person name="Pilcher K."/>
            <person name="Chen G."/>
            <person name="Saunders D."/>
            <person name="Sodergren E.J."/>
            <person name="Davis P."/>
            <person name="Kerhornou A."/>
            <person name="Nie X."/>
            <person name="Hall N."/>
            <person name="Anjard C."/>
            <person name="Hemphill L."/>
            <person name="Bason N."/>
            <person name="Farbrother P."/>
            <person name="Desany B."/>
            <person name="Just E."/>
            <person name="Morio T."/>
            <person name="Rost R."/>
            <person name="Churcher C.M."/>
            <person name="Cooper J."/>
            <person name="Haydock S."/>
            <person name="van Driessche N."/>
            <person name="Cronin A."/>
            <person name="Goodhead I."/>
            <person name="Muzny D.M."/>
            <person name="Mourier T."/>
            <person name="Pain A."/>
            <person name="Lu M."/>
            <person name="Harper D."/>
            <person name="Lindsay R."/>
            <person name="Hauser H."/>
            <person name="James K.D."/>
            <person name="Quiles M."/>
            <person name="Madan Babu M."/>
            <person name="Saito T."/>
            <person name="Buchrieser C."/>
            <person name="Wardroper A."/>
            <person name="Felder M."/>
            <person name="Thangavelu M."/>
            <person name="Johnson D."/>
            <person name="Knights A."/>
            <person name="Loulseged H."/>
            <person name="Mungall K.L."/>
            <person name="Oliver K."/>
            <person name="Price C."/>
            <person name="Quail M.A."/>
            <person name="Urushihara H."/>
            <person name="Hernandez J."/>
            <person name="Rabbinowitsch E."/>
            <person name="Steffen D."/>
            <person name="Sanders M."/>
            <person name="Ma J."/>
            <person name="Kohara Y."/>
            <person name="Sharp S."/>
            <person name="Simmonds M.N."/>
            <person name="Spiegler S."/>
            <person name="Tivey A."/>
            <person name="Sugano S."/>
            <person name="White B."/>
            <person name="Walker D."/>
            <person name="Woodward J.R."/>
            <person name="Winckler T."/>
            <person name="Tanaka Y."/>
            <person name="Shaulsky G."/>
            <person name="Schleicher M."/>
            <person name="Weinstock G.M."/>
            <person name="Rosenthal A."/>
            <person name="Cox E.C."/>
            <person name="Chisholm R.L."/>
            <person name="Gibbs R.A."/>
            <person name="Loomis W.F."/>
            <person name="Platzer M."/>
            <person name="Kay R.R."/>
            <person name="Williams J.G."/>
            <person name="Dear P.H."/>
            <person name="Noegel A.A."/>
            <person name="Barrell B.G."/>
            <person name="Kuspa A."/>
        </authorList>
    </citation>
    <scope>NUCLEOTIDE SEQUENCE [LARGE SCALE GENOMIC DNA]</scope>
    <source>
        <strain>AX4</strain>
    </source>
</reference>
<reference key="3">
    <citation type="submission" date="2009-07" db="UniProtKB">
        <authorList>
            <person name="Bienvenut W.V."/>
            <person name="Ura S."/>
            <person name="Insall R.H."/>
        </authorList>
    </citation>
    <scope>PROTEIN SEQUENCE OF 146-155; 195-204 AND 357-365</scope>
    <scope>IDENTIFICATION BY MASS SPECTROMETRY</scope>
    <source>
        <strain>AX2</strain>
    </source>
</reference>
<protein>
    <recommendedName>
        <fullName evidence="3">Large ribosomal subunit protein uL3</fullName>
    </recommendedName>
    <alternativeName>
        <fullName>60S ribosomal protein L3</fullName>
    </alternativeName>
</protein>